<proteinExistence type="inferred from homology"/>
<sequence length="155" mass="17597">MLKQVEIFTDGSCLGNPGPGGYGAILRYRGREKTFSAGYTRTTNNRMELMAAIVALEALKEHCEVILSTDSQYVRQGITQWIHNWKKRGWKTADKKPVKNVDLWQRLDAALGQHQIKWEWVKGHAGHPENERCDELARAAAMNPTLEDTGYQVEV</sequence>
<comment type="function">
    <text evidence="1">Endonuclease that specifically degrades the RNA of RNA-DNA hybrids.</text>
</comment>
<comment type="catalytic activity">
    <reaction evidence="1">
        <text>Endonucleolytic cleavage to 5'-phosphomonoester.</text>
        <dbReference type="EC" id="3.1.26.4"/>
    </reaction>
</comment>
<comment type="cofactor">
    <cofactor evidence="1">
        <name>Mg(2+)</name>
        <dbReference type="ChEBI" id="CHEBI:18420"/>
    </cofactor>
    <text evidence="1">Binds 1 Mg(2+) ion per subunit. May bind a second metal ion at a regulatory site, or after substrate binding.</text>
</comment>
<comment type="subunit">
    <text evidence="1">Monomer.</text>
</comment>
<comment type="subcellular location">
    <subcellularLocation>
        <location evidence="1">Cytoplasm</location>
    </subcellularLocation>
</comment>
<comment type="similarity">
    <text evidence="1">Belongs to the RNase H family.</text>
</comment>
<gene>
    <name evidence="1" type="primary">rnhA</name>
    <name type="ordered locus">ECSE_0210</name>
</gene>
<organism>
    <name type="scientific">Escherichia coli (strain SE11)</name>
    <dbReference type="NCBI Taxonomy" id="409438"/>
    <lineage>
        <taxon>Bacteria</taxon>
        <taxon>Pseudomonadati</taxon>
        <taxon>Pseudomonadota</taxon>
        <taxon>Gammaproteobacteria</taxon>
        <taxon>Enterobacterales</taxon>
        <taxon>Enterobacteriaceae</taxon>
        <taxon>Escherichia</taxon>
    </lineage>
</organism>
<accession>B6HZS7</accession>
<evidence type="ECO:0000255" key="1">
    <source>
        <dbReference type="HAMAP-Rule" id="MF_00042"/>
    </source>
</evidence>
<evidence type="ECO:0000255" key="2">
    <source>
        <dbReference type="PROSITE-ProRule" id="PRU00408"/>
    </source>
</evidence>
<protein>
    <recommendedName>
        <fullName evidence="1">Ribonuclease H</fullName>
        <shortName evidence="1">RNase H</shortName>
        <ecNumber evidence="1">3.1.26.4</ecNumber>
    </recommendedName>
</protein>
<reference key="1">
    <citation type="journal article" date="2008" name="DNA Res.">
        <title>Complete genome sequence and comparative analysis of the wild-type commensal Escherichia coli strain SE11 isolated from a healthy adult.</title>
        <authorList>
            <person name="Oshima K."/>
            <person name="Toh H."/>
            <person name="Ogura Y."/>
            <person name="Sasamoto H."/>
            <person name="Morita H."/>
            <person name="Park S.-H."/>
            <person name="Ooka T."/>
            <person name="Iyoda S."/>
            <person name="Taylor T.D."/>
            <person name="Hayashi T."/>
            <person name="Itoh K."/>
            <person name="Hattori M."/>
        </authorList>
    </citation>
    <scope>NUCLEOTIDE SEQUENCE [LARGE SCALE GENOMIC DNA]</scope>
    <source>
        <strain>SE11</strain>
    </source>
</reference>
<dbReference type="EC" id="3.1.26.4" evidence="1"/>
<dbReference type="EMBL" id="AP009240">
    <property type="protein sequence ID" value="BAG75734.1"/>
    <property type="molecule type" value="Genomic_DNA"/>
</dbReference>
<dbReference type="RefSeq" id="WP_000917883.1">
    <property type="nucleotide sequence ID" value="NC_011415.1"/>
</dbReference>
<dbReference type="SMR" id="B6HZS7"/>
<dbReference type="GeneID" id="93777209"/>
<dbReference type="KEGG" id="ecy:ECSE_0210"/>
<dbReference type="HOGENOM" id="CLU_030894_6_0_6"/>
<dbReference type="Proteomes" id="UP000008199">
    <property type="component" value="Chromosome"/>
</dbReference>
<dbReference type="GO" id="GO:0005737">
    <property type="term" value="C:cytoplasm"/>
    <property type="evidence" value="ECO:0007669"/>
    <property type="project" value="UniProtKB-SubCell"/>
</dbReference>
<dbReference type="GO" id="GO:0000287">
    <property type="term" value="F:magnesium ion binding"/>
    <property type="evidence" value="ECO:0007669"/>
    <property type="project" value="UniProtKB-UniRule"/>
</dbReference>
<dbReference type="GO" id="GO:0003676">
    <property type="term" value="F:nucleic acid binding"/>
    <property type="evidence" value="ECO:0007669"/>
    <property type="project" value="InterPro"/>
</dbReference>
<dbReference type="GO" id="GO:0004523">
    <property type="term" value="F:RNA-DNA hybrid ribonuclease activity"/>
    <property type="evidence" value="ECO:0007669"/>
    <property type="project" value="UniProtKB-UniRule"/>
</dbReference>
<dbReference type="GO" id="GO:0043137">
    <property type="term" value="P:DNA replication, removal of RNA primer"/>
    <property type="evidence" value="ECO:0007669"/>
    <property type="project" value="TreeGrafter"/>
</dbReference>
<dbReference type="CDD" id="cd09278">
    <property type="entry name" value="RNase_HI_prokaryote_like"/>
    <property type="match status" value="1"/>
</dbReference>
<dbReference type="FunFam" id="3.30.420.10:FF:000008">
    <property type="entry name" value="Ribonuclease H"/>
    <property type="match status" value="1"/>
</dbReference>
<dbReference type="Gene3D" id="3.30.420.10">
    <property type="entry name" value="Ribonuclease H-like superfamily/Ribonuclease H"/>
    <property type="match status" value="1"/>
</dbReference>
<dbReference type="HAMAP" id="MF_00042">
    <property type="entry name" value="RNase_H"/>
    <property type="match status" value="1"/>
</dbReference>
<dbReference type="InterPro" id="IPR050092">
    <property type="entry name" value="RNase_H"/>
</dbReference>
<dbReference type="InterPro" id="IPR012337">
    <property type="entry name" value="RNaseH-like_sf"/>
</dbReference>
<dbReference type="InterPro" id="IPR002156">
    <property type="entry name" value="RNaseH_domain"/>
</dbReference>
<dbReference type="InterPro" id="IPR036397">
    <property type="entry name" value="RNaseH_sf"/>
</dbReference>
<dbReference type="InterPro" id="IPR022892">
    <property type="entry name" value="RNaseHI"/>
</dbReference>
<dbReference type="NCBIfam" id="NF001236">
    <property type="entry name" value="PRK00203.1"/>
    <property type="match status" value="1"/>
</dbReference>
<dbReference type="PANTHER" id="PTHR10642">
    <property type="entry name" value="RIBONUCLEASE H1"/>
    <property type="match status" value="1"/>
</dbReference>
<dbReference type="PANTHER" id="PTHR10642:SF26">
    <property type="entry name" value="RIBONUCLEASE H1"/>
    <property type="match status" value="1"/>
</dbReference>
<dbReference type="Pfam" id="PF00075">
    <property type="entry name" value="RNase_H"/>
    <property type="match status" value="1"/>
</dbReference>
<dbReference type="SUPFAM" id="SSF53098">
    <property type="entry name" value="Ribonuclease H-like"/>
    <property type="match status" value="1"/>
</dbReference>
<dbReference type="PROSITE" id="PS50879">
    <property type="entry name" value="RNASE_H_1"/>
    <property type="match status" value="1"/>
</dbReference>
<feature type="chain" id="PRO_1000090900" description="Ribonuclease H">
    <location>
        <begin position="1"/>
        <end position="155"/>
    </location>
</feature>
<feature type="domain" description="RNase H type-1" evidence="2">
    <location>
        <begin position="1"/>
        <end position="142"/>
    </location>
</feature>
<feature type="binding site" evidence="1">
    <location>
        <position position="10"/>
    </location>
    <ligand>
        <name>Mg(2+)</name>
        <dbReference type="ChEBI" id="CHEBI:18420"/>
        <label>1</label>
    </ligand>
</feature>
<feature type="binding site" evidence="1">
    <location>
        <position position="10"/>
    </location>
    <ligand>
        <name>Mg(2+)</name>
        <dbReference type="ChEBI" id="CHEBI:18420"/>
        <label>2</label>
    </ligand>
</feature>
<feature type="binding site" evidence="1">
    <location>
        <position position="48"/>
    </location>
    <ligand>
        <name>Mg(2+)</name>
        <dbReference type="ChEBI" id="CHEBI:18420"/>
        <label>1</label>
    </ligand>
</feature>
<feature type="binding site" evidence="1">
    <location>
        <position position="70"/>
    </location>
    <ligand>
        <name>Mg(2+)</name>
        <dbReference type="ChEBI" id="CHEBI:18420"/>
        <label>1</label>
    </ligand>
</feature>
<feature type="binding site" evidence="1">
    <location>
        <position position="134"/>
    </location>
    <ligand>
        <name>Mg(2+)</name>
        <dbReference type="ChEBI" id="CHEBI:18420"/>
        <label>2</label>
    </ligand>
</feature>
<name>RNH_ECOSE</name>
<keyword id="KW-0963">Cytoplasm</keyword>
<keyword id="KW-0255">Endonuclease</keyword>
<keyword id="KW-0378">Hydrolase</keyword>
<keyword id="KW-0460">Magnesium</keyword>
<keyword id="KW-0479">Metal-binding</keyword>
<keyword id="KW-0540">Nuclease</keyword>